<sequence length="421" mass="44984">MNNDEYLTALGQNAKQASYALATLSGQQKSALLRCIANKLTAAKDDIVAANQQDVADAKANGLSDAMIDRLLLDETRLMGVISDIDNVIGLTDPVGCEIDSRLLDNGLRLSRRRVPLGVIGVIYEARPNVTVDIAVLALKTGNAVILRGGKETLSSNKALCKVIRSAMVEQGLSEDCVQLIDNPDRALVSGLLKLDKYVDMIVPRGGQNLQRLCAEQATIPVILGGIGICHIYVDAAANLEKAVAVIENAKVQRPTVCNALDTVLVHASHAKAFIPVLAKHLSGLGVKFYGCEQTQAILGAEKIEVSAADDESYSTEWLSLTLGLKVVADLESAVEHIRTFSSGHSESILTDNIHTASEFMNAVDSAAVYVNASTRFTDGGEFGLGAEVAVSTQKLHARGPMGLEALTTYKWLAWGDYTVR</sequence>
<proteinExistence type="inferred from homology"/>
<evidence type="ECO:0000255" key="1">
    <source>
        <dbReference type="HAMAP-Rule" id="MF_00412"/>
    </source>
</evidence>
<organism>
    <name type="scientific">Shewanella pealeana (strain ATCC 700345 / ANG-SQ1)</name>
    <dbReference type="NCBI Taxonomy" id="398579"/>
    <lineage>
        <taxon>Bacteria</taxon>
        <taxon>Pseudomonadati</taxon>
        <taxon>Pseudomonadota</taxon>
        <taxon>Gammaproteobacteria</taxon>
        <taxon>Alteromonadales</taxon>
        <taxon>Shewanellaceae</taxon>
        <taxon>Shewanella</taxon>
    </lineage>
</organism>
<reference key="1">
    <citation type="submission" date="2007-10" db="EMBL/GenBank/DDBJ databases">
        <title>Complete sequence of Shewanella pealeana ATCC 700345.</title>
        <authorList>
            <consortium name="US DOE Joint Genome Institute"/>
            <person name="Copeland A."/>
            <person name="Lucas S."/>
            <person name="Lapidus A."/>
            <person name="Barry K."/>
            <person name="Glavina del Rio T."/>
            <person name="Dalin E."/>
            <person name="Tice H."/>
            <person name="Pitluck S."/>
            <person name="Chertkov O."/>
            <person name="Brettin T."/>
            <person name="Bruce D."/>
            <person name="Detter J.C."/>
            <person name="Han C."/>
            <person name="Schmutz J."/>
            <person name="Larimer F."/>
            <person name="Land M."/>
            <person name="Hauser L."/>
            <person name="Kyrpides N."/>
            <person name="Kim E."/>
            <person name="Zhao J.-S.Z."/>
            <person name="Manno D."/>
            <person name="Hawari J."/>
            <person name="Richardson P."/>
        </authorList>
    </citation>
    <scope>NUCLEOTIDE SEQUENCE [LARGE SCALE GENOMIC DNA]</scope>
    <source>
        <strain>ATCC 700345 / ANG-SQ1</strain>
    </source>
</reference>
<comment type="function">
    <text evidence="1">Catalyzes the NADPH-dependent reduction of L-glutamate 5-phosphate into L-glutamate 5-semialdehyde and phosphate. The product spontaneously undergoes cyclization to form 1-pyrroline-5-carboxylate.</text>
</comment>
<comment type="catalytic activity">
    <reaction evidence="1">
        <text>L-glutamate 5-semialdehyde + phosphate + NADP(+) = L-glutamyl 5-phosphate + NADPH + H(+)</text>
        <dbReference type="Rhea" id="RHEA:19541"/>
        <dbReference type="ChEBI" id="CHEBI:15378"/>
        <dbReference type="ChEBI" id="CHEBI:43474"/>
        <dbReference type="ChEBI" id="CHEBI:57783"/>
        <dbReference type="ChEBI" id="CHEBI:58066"/>
        <dbReference type="ChEBI" id="CHEBI:58274"/>
        <dbReference type="ChEBI" id="CHEBI:58349"/>
        <dbReference type="EC" id="1.2.1.41"/>
    </reaction>
</comment>
<comment type="pathway">
    <text evidence="1">Amino-acid biosynthesis; L-proline biosynthesis; L-glutamate 5-semialdehyde from L-glutamate: step 2/2.</text>
</comment>
<comment type="subcellular location">
    <subcellularLocation>
        <location evidence="1">Cytoplasm</location>
    </subcellularLocation>
</comment>
<comment type="similarity">
    <text evidence="1">Belongs to the gamma-glutamyl phosphate reductase family.</text>
</comment>
<feature type="chain" id="PRO_0000340917" description="Gamma-glutamyl phosphate reductase">
    <location>
        <begin position="1"/>
        <end position="421"/>
    </location>
</feature>
<name>PROA_SHEPA</name>
<protein>
    <recommendedName>
        <fullName evidence="1">Gamma-glutamyl phosphate reductase</fullName>
        <shortName evidence="1">GPR</shortName>
        <ecNumber evidence="1">1.2.1.41</ecNumber>
    </recommendedName>
    <alternativeName>
        <fullName evidence="1">Glutamate-5-semialdehyde dehydrogenase</fullName>
    </alternativeName>
    <alternativeName>
        <fullName evidence="1">Glutamyl-gamma-semialdehyde dehydrogenase</fullName>
        <shortName evidence="1">GSA dehydrogenase</shortName>
    </alternativeName>
</protein>
<accession>A8H764</accession>
<gene>
    <name evidence="1" type="primary">proA</name>
    <name type="ordered locus">Spea_3084</name>
</gene>
<dbReference type="EC" id="1.2.1.41" evidence="1"/>
<dbReference type="EMBL" id="CP000851">
    <property type="protein sequence ID" value="ABV88401.1"/>
    <property type="molecule type" value="Genomic_DNA"/>
</dbReference>
<dbReference type="RefSeq" id="WP_012156303.1">
    <property type="nucleotide sequence ID" value="NC_009901.1"/>
</dbReference>
<dbReference type="SMR" id="A8H764"/>
<dbReference type="STRING" id="398579.Spea_3084"/>
<dbReference type="KEGG" id="spl:Spea_3084"/>
<dbReference type="eggNOG" id="COG0014">
    <property type="taxonomic scope" value="Bacteria"/>
</dbReference>
<dbReference type="HOGENOM" id="CLU_030231_0_0_6"/>
<dbReference type="OrthoDB" id="9809970at2"/>
<dbReference type="UniPathway" id="UPA00098">
    <property type="reaction ID" value="UER00360"/>
</dbReference>
<dbReference type="Proteomes" id="UP000002608">
    <property type="component" value="Chromosome"/>
</dbReference>
<dbReference type="GO" id="GO:0005737">
    <property type="term" value="C:cytoplasm"/>
    <property type="evidence" value="ECO:0007669"/>
    <property type="project" value="UniProtKB-SubCell"/>
</dbReference>
<dbReference type="GO" id="GO:0004350">
    <property type="term" value="F:glutamate-5-semialdehyde dehydrogenase activity"/>
    <property type="evidence" value="ECO:0007669"/>
    <property type="project" value="UniProtKB-UniRule"/>
</dbReference>
<dbReference type="GO" id="GO:0050661">
    <property type="term" value="F:NADP binding"/>
    <property type="evidence" value="ECO:0007669"/>
    <property type="project" value="InterPro"/>
</dbReference>
<dbReference type="GO" id="GO:0055129">
    <property type="term" value="P:L-proline biosynthetic process"/>
    <property type="evidence" value="ECO:0007669"/>
    <property type="project" value="UniProtKB-UniRule"/>
</dbReference>
<dbReference type="CDD" id="cd07079">
    <property type="entry name" value="ALDH_F18-19_ProA-GPR"/>
    <property type="match status" value="1"/>
</dbReference>
<dbReference type="FunFam" id="3.40.309.10:FF:000006">
    <property type="entry name" value="Gamma-glutamyl phosphate reductase"/>
    <property type="match status" value="1"/>
</dbReference>
<dbReference type="Gene3D" id="3.40.605.10">
    <property type="entry name" value="Aldehyde Dehydrogenase, Chain A, domain 1"/>
    <property type="match status" value="1"/>
</dbReference>
<dbReference type="Gene3D" id="3.40.309.10">
    <property type="entry name" value="Aldehyde Dehydrogenase, Chain A, domain 2"/>
    <property type="match status" value="1"/>
</dbReference>
<dbReference type="HAMAP" id="MF_00412">
    <property type="entry name" value="ProA"/>
    <property type="match status" value="1"/>
</dbReference>
<dbReference type="InterPro" id="IPR016161">
    <property type="entry name" value="Ald_DH/histidinol_DH"/>
</dbReference>
<dbReference type="InterPro" id="IPR016163">
    <property type="entry name" value="Ald_DH_C"/>
</dbReference>
<dbReference type="InterPro" id="IPR016162">
    <property type="entry name" value="Ald_DH_N"/>
</dbReference>
<dbReference type="InterPro" id="IPR015590">
    <property type="entry name" value="Aldehyde_DH_dom"/>
</dbReference>
<dbReference type="InterPro" id="IPR020593">
    <property type="entry name" value="G-glutamylP_reductase_CS"/>
</dbReference>
<dbReference type="InterPro" id="IPR012134">
    <property type="entry name" value="Glu-5-SA_DH"/>
</dbReference>
<dbReference type="InterPro" id="IPR000965">
    <property type="entry name" value="GPR_dom"/>
</dbReference>
<dbReference type="NCBIfam" id="NF001221">
    <property type="entry name" value="PRK00197.1"/>
    <property type="match status" value="1"/>
</dbReference>
<dbReference type="NCBIfam" id="TIGR00407">
    <property type="entry name" value="proA"/>
    <property type="match status" value="1"/>
</dbReference>
<dbReference type="PANTHER" id="PTHR11063:SF8">
    <property type="entry name" value="DELTA-1-PYRROLINE-5-CARBOXYLATE SYNTHASE"/>
    <property type="match status" value="1"/>
</dbReference>
<dbReference type="PANTHER" id="PTHR11063">
    <property type="entry name" value="GLUTAMATE SEMIALDEHYDE DEHYDROGENASE"/>
    <property type="match status" value="1"/>
</dbReference>
<dbReference type="Pfam" id="PF00171">
    <property type="entry name" value="Aldedh"/>
    <property type="match status" value="1"/>
</dbReference>
<dbReference type="PIRSF" id="PIRSF000151">
    <property type="entry name" value="GPR"/>
    <property type="match status" value="1"/>
</dbReference>
<dbReference type="SUPFAM" id="SSF53720">
    <property type="entry name" value="ALDH-like"/>
    <property type="match status" value="1"/>
</dbReference>
<dbReference type="PROSITE" id="PS01223">
    <property type="entry name" value="PROA"/>
    <property type="match status" value="1"/>
</dbReference>
<keyword id="KW-0028">Amino-acid biosynthesis</keyword>
<keyword id="KW-0963">Cytoplasm</keyword>
<keyword id="KW-0521">NADP</keyword>
<keyword id="KW-0560">Oxidoreductase</keyword>
<keyword id="KW-0641">Proline biosynthesis</keyword>
<keyword id="KW-1185">Reference proteome</keyword>